<keyword id="KW-1003">Cell membrane</keyword>
<keyword id="KW-0342">GTP-binding</keyword>
<keyword id="KW-0449">Lipoprotein</keyword>
<keyword id="KW-0472">Membrane</keyword>
<keyword id="KW-0488">Methylation</keyword>
<keyword id="KW-0547">Nucleotide-binding</keyword>
<keyword id="KW-0636">Prenylation</keyword>
<keyword id="KW-1185">Reference proteome</keyword>
<name>RHOC_PONAB</name>
<organism>
    <name type="scientific">Pongo abelii</name>
    <name type="common">Sumatran orangutan</name>
    <name type="synonym">Pongo pygmaeus abelii</name>
    <dbReference type="NCBI Taxonomy" id="9601"/>
    <lineage>
        <taxon>Eukaryota</taxon>
        <taxon>Metazoa</taxon>
        <taxon>Chordata</taxon>
        <taxon>Craniata</taxon>
        <taxon>Vertebrata</taxon>
        <taxon>Euteleostomi</taxon>
        <taxon>Mammalia</taxon>
        <taxon>Eutheria</taxon>
        <taxon>Euarchontoglires</taxon>
        <taxon>Primates</taxon>
        <taxon>Haplorrhini</taxon>
        <taxon>Catarrhini</taxon>
        <taxon>Hominidae</taxon>
        <taxon>Pongo</taxon>
    </lineage>
</organism>
<proteinExistence type="evidence at transcript level"/>
<sequence length="193" mass="22006">MAAIRKKLVIVGDGACGKTCLLIVFSKDQFPEVYVPTVFENYIADIEVDGKQVELALWDTAGQEDYDRLRPLSYPDTDVILMCFSIDSPDSLENIPEKWTPEVKHFCPNVPIILVGNKKDLRQDEHTRRELAKMKQEPVRSEEGRDMANRISAFGYLECSAKTKEGVREVFEMATRAGLQVRKNKRRRGCPIL</sequence>
<protein>
    <recommendedName>
        <fullName>Rho-related GTP-binding protein RhoC</fullName>
    </recommendedName>
</protein>
<evidence type="ECO:0000250" key="1"/>
<evidence type="ECO:0000250" key="2">
    <source>
        <dbReference type="UniProtKB" id="P08134"/>
    </source>
</evidence>
<evidence type="ECO:0000250" key="3">
    <source>
        <dbReference type="UniProtKB" id="Q62159"/>
    </source>
</evidence>
<evidence type="ECO:0000255" key="4"/>
<evidence type="ECO:0000305" key="5"/>
<dbReference type="EMBL" id="CR858261">
    <property type="protein sequence ID" value="CAH90498.1"/>
    <property type="molecule type" value="mRNA"/>
</dbReference>
<dbReference type="RefSeq" id="NP_001125261.1">
    <property type="nucleotide sequence ID" value="NM_001131789.1"/>
</dbReference>
<dbReference type="RefSeq" id="XP_024102980.1">
    <property type="nucleotide sequence ID" value="XM_024247212.3"/>
</dbReference>
<dbReference type="RefSeq" id="XP_024103021.1">
    <property type="nucleotide sequence ID" value="XM_024247253.3"/>
</dbReference>
<dbReference type="RefSeq" id="XP_024103060.1">
    <property type="nucleotide sequence ID" value="XM_024247292.3"/>
</dbReference>
<dbReference type="RefSeq" id="XP_024103101.1">
    <property type="nucleotide sequence ID" value="XM_024247333.3"/>
</dbReference>
<dbReference type="SMR" id="Q5RCK9"/>
<dbReference type="FunCoup" id="Q5RCK9">
    <property type="interactions" value="1430"/>
</dbReference>
<dbReference type="STRING" id="9601.ENSPPYP00000001186"/>
<dbReference type="Ensembl" id="ENSPPYT00000001226.3">
    <property type="protein sequence ID" value="ENSPPYP00000001186.3"/>
    <property type="gene ID" value="ENSPPYG00000001018.3"/>
</dbReference>
<dbReference type="GeneID" id="100172158"/>
<dbReference type="KEGG" id="pon:100172158"/>
<dbReference type="CTD" id="389"/>
<dbReference type="eggNOG" id="KOG0393">
    <property type="taxonomic scope" value="Eukaryota"/>
</dbReference>
<dbReference type="GeneTree" id="ENSGT00940000160965"/>
<dbReference type="InParanoid" id="Q5RCK9"/>
<dbReference type="OMA" id="KNGFIMF"/>
<dbReference type="OrthoDB" id="8830751at2759"/>
<dbReference type="Proteomes" id="UP000001595">
    <property type="component" value="Chromosome 1"/>
</dbReference>
<dbReference type="GO" id="GO:0032154">
    <property type="term" value="C:cleavage furrow"/>
    <property type="evidence" value="ECO:0000250"/>
    <property type="project" value="UniProtKB"/>
</dbReference>
<dbReference type="GO" id="GO:0032420">
    <property type="term" value="C:stereocilium"/>
    <property type="evidence" value="ECO:0000250"/>
    <property type="project" value="UniProtKB"/>
</dbReference>
<dbReference type="GO" id="GO:0005525">
    <property type="term" value="F:GTP binding"/>
    <property type="evidence" value="ECO:0007669"/>
    <property type="project" value="UniProtKB-KW"/>
</dbReference>
<dbReference type="GO" id="GO:0003924">
    <property type="term" value="F:GTPase activity"/>
    <property type="evidence" value="ECO:0007669"/>
    <property type="project" value="InterPro"/>
</dbReference>
<dbReference type="GO" id="GO:0043297">
    <property type="term" value="P:apical junction assembly"/>
    <property type="evidence" value="ECO:0000250"/>
    <property type="project" value="UniProtKB"/>
</dbReference>
<dbReference type="GO" id="GO:0000281">
    <property type="term" value="P:mitotic cytokinesis"/>
    <property type="evidence" value="ECO:0000250"/>
    <property type="project" value="UniProtKB"/>
</dbReference>
<dbReference type="GO" id="GO:0031334">
    <property type="term" value="P:positive regulation of protein-containing complex assembly"/>
    <property type="evidence" value="ECO:0000250"/>
    <property type="project" value="UniProtKB"/>
</dbReference>
<dbReference type="GO" id="GO:1902766">
    <property type="term" value="P:skeletal muscle satellite cell migration"/>
    <property type="evidence" value="ECO:0000250"/>
    <property type="project" value="AgBase"/>
</dbReference>
<dbReference type="GO" id="GO:0007264">
    <property type="term" value="P:small GTPase-mediated signal transduction"/>
    <property type="evidence" value="ECO:0007669"/>
    <property type="project" value="InterPro"/>
</dbReference>
<dbReference type="GO" id="GO:0044319">
    <property type="term" value="P:wound healing, spreading of cells"/>
    <property type="evidence" value="ECO:0000250"/>
    <property type="project" value="AgBase"/>
</dbReference>
<dbReference type="CDD" id="cd01870">
    <property type="entry name" value="RhoA_like"/>
    <property type="match status" value="1"/>
</dbReference>
<dbReference type="FunFam" id="3.40.50.300:FF:000095">
    <property type="entry name" value="Rho-related GTP-binding protein RhoC"/>
    <property type="match status" value="1"/>
</dbReference>
<dbReference type="Gene3D" id="3.40.50.300">
    <property type="entry name" value="P-loop containing nucleotide triphosphate hydrolases"/>
    <property type="match status" value="1"/>
</dbReference>
<dbReference type="InterPro" id="IPR027417">
    <property type="entry name" value="P-loop_NTPase"/>
</dbReference>
<dbReference type="InterPro" id="IPR005225">
    <property type="entry name" value="Small_GTP-bd"/>
</dbReference>
<dbReference type="InterPro" id="IPR001806">
    <property type="entry name" value="Small_GTPase"/>
</dbReference>
<dbReference type="InterPro" id="IPR003578">
    <property type="entry name" value="Small_GTPase_Rho"/>
</dbReference>
<dbReference type="NCBIfam" id="TIGR00231">
    <property type="entry name" value="small_GTP"/>
    <property type="match status" value="1"/>
</dbReference>
<dbReference type="PANTHER" id="PTHR24072">
    <property type="entry name" value="RHO FAMILY GTPASE"/>
    <property type="match status" value="1"/>
</dbReference>
<dbReference type="Pfam" id="PF00071">
    <property type="entry name" value="Ras"/>
    <property type="match status" value="1"/>
</dbReference>
<dbReference type="PRINTS" id="PR00449">
    <property type="entry name" value="RASTRNSFRMNG"/>
</dbReference>
<dbReference type="SMART" id="SM00175">
    <property type="entry name" value="RAB"/>
    <property type="match status" value="1"/>
</dbReference>
<dbReference type="SMART" id="SM00173">
    <property type="entry name" value="RAS"/>
    <property type="match status" value="1"/>
</dbReference>
<dbReference type="SMART" id="SM00174">
    <property type="entry name" value="RHO"/>
    <property type="match status" value="1"/>
</dbReference>
<dbReference type="SUPFAM" id="SSF52540">
    <property type="entry name" value="P-loop containing nucleoside triphosphate hydrolases"/>
    <property type="match status" value="1"/>
</dbReference>
<dbReference type="PROSITE" id="PS51420">
    <property type="entry name" value="RHO"/>
    <property type="match status" value="1"/>
</dbReference>
<gene>
    <name type="primary">RHOC</name>
    <name type="synonym">ARHC</name>
</gene>
<reference key="1">
    <citation type="submission" date="2004-11" db="EMBL/GenBank/DDBJ databases">
        <authorList>
            <consortium name="The German cDNA consortium"/>
        </authorList>
    </citation>
    <scope>NUCLEOTIDE SEQUENCE [LARGE SCALE MRNA]</scope>
    <source>
        <tissue>Kidney</tissue>
    </source>
</reference>
<comment type="function">
    <text evidence="1">Regulates a signal transduction pathway linking plasma membrane receptors to the assembly of focal adhesions and actin stress fibers. Serves as a microtubule-dependent signal that is required for the myosin contractile ring formation during cell cycle cytokinesis. Regulates apical junction formation in bronchial epithelial cells (By similarity).</text>
</comment>
<comment type="subunit">
    <text evidence="2 3">Interacts with RTKN. Interacts with AKAP13. Interacts with DIAPH1. Interacts with PKN2. Interacts with ROCK1 and ROCK2. Interacts with ARHGDIA. Interacts with RIPOR1.</text>
</comment>
<comment type="subcellular location">
    <subcellularLocation>
        <location evidence="5">Cell membrane</location>
        <topology evidence="5">Lipid-anchor</topology>
        <orientation evidence="5">Cytoplasmic side</orientation>
    </subcellularLocation>
    <subcellularLocation>
        <location evidence="1">Cleavage furrow</location>
    </subcellularLocation>
    <text evidence="1">Translocates to the equatorial region before furrow formation in a ECT2-dependent manner.</text>
</comment>
<comment type="similarity">
    <text evidence="5">Belongs to the small GTPase superfamily. Rho family.</text>
</comment>
<accession>Q5RCK9</accession>
<feature type="chain" id="PRO_0000265730" description="Rho-related GTP-binding protein RhoC">
    <location>
        <begin position="1"/>
        <end position="190"/>
    </location>
</feature>
<feature type="propeptide" id="PRO_0000265731" description="Removed in mature form" evidence="1">
    <location>
        <begin position="191"/>
        <end position="193"/>
    </location>
</feature>
<feature type="short sequence motif" description="Effector region" evidence="4">
    <location>
        <begin position="34"/>
        <end position="42"/>
    </location>
</feature>
<feature type="binding site" evidence="1">
    <location>
        <begin position="12"/>
        <end position="19"/>
    </location>
    <ligand>
        <name>GTP</name>
        <dbReference type="ChEBI" id="CHEBI:37565"/>
    </ligand>
</feature>
<feature type="binding site" evidence="1">
    <location>
        <begin position="59"/>
        <end position="63"/>
    </location>
    <ligand>
        <name>GTP</name>
        <dbReference type="ChEBI" id="CHEBI:37565"/>
    </ligand>
</feature>
<feature type="binding site" evidence="1">
    <location>
        <begin position="117"/>
        <end position="120"/>
    </location>
    <ligand>
        <name>GTP</name>
        <dbReference type="ChEBI" id="CHEBI:37565"/>
    </ligand>
</feature>
<feature type="modified residue" description="Cysteine methyl ester" evidence="1">
    <location>
        <position position="190"/>
    </location>
</feature>
<feature type="lipid moiety-binding region" description="S-geranylgeranyl cysteine" evidence="1">
    <location>
        <position position="190"/>
    </location>
</feature>